<name>RL5_LEPIC</name>
<reference key="1">
    <citation type="journal article" date="2004" name="J. Bacteriol.">
        <title>Comparative genomics of two Leptospira interrogans serovars reveals novel insights into physiology and pathogenesis.</title>
        <authorList>
            <person name="Nascimento A.L.T.O."/>
            <person name="Ko A.I."/>
            <person name="Martins E.A.L."/>
            <person name="Monteiro-Vitorello C.B."/>
            <person name="Ho P.L."/>
            <person name="Haake D.A."/>
            <person name="Verjovski-Almeida S."/>
            <person name="Hartskeerl R.A."/>
            <person name="Marques M.V."/>
            <person name="Oliveira M.C."/>
            <person name="Menck C.F.M."/>
            <person name="Leite L.C.C."/>
            <person name="Carrer H."/>
            <person name="Coutinho L.L."/>
            <person name="Degrave W.M."/>
            <person name="Dellagostin O.A."/>
            <person name="El-Dorry H."/>
            <person name="Ferro E.S."/>
            <person name="Ferro M.I.T."/>
            <person name="Furlan L.R."/>
            <person name="Gamberini M."/>
            <person name="Giglioti E.A."/>
            <person name="Goes-Neto A."/>
            <person name="Goldman G.H."/>
            <person name="Goldman M.H.S."/>
            <person name="Harakava R."/>
            <person name="Jeronimo S.M.B."/>
            <person name="Junqueira-de-Azevedo I.L.M."/>
            <person name="Kimura E.T."/>
            <person name="Kuramae E.E."/>
            <person name="Lemos E.G.M."/>
            <person name="Lemos M.V.F."/>
            <person name="Marino C.L."/>
            <person name="Nunes L.R."/>
            <person name="de Oliveira R.C."/>
            <person name="Pereira G.G."/>
            <person name="Reis M.S."/>
            <person name="Schriefer A."/>
            <person name="Siqueira W.J."/>
            <person name="Sommer P."/>
            <person name="Tsai S.M."/>
            <person name="Simpson A.J.G."/>
            <person name="Ferro J.A."/>
            <person name="Camargo L.E.A."/>
            <person name="Kitajima J.P."/>
            <person name="Setubal J.C."/>
            <person name="Van Sluys M.A."/>
        </authorList>
    </citation>
    <scope>NUCLEOTIDE SEQUENCE [LARGE SCALE GENOMIC DNA]</scope>
    <source>
        <strain>Fiocruz L1-130</strain>
    </source>
</reference>
<comment type="function">
    <text evidence="1">This is one of the proteins that bind and probably mediate the attachment of the 5S RNA into the large ribosomal subunit, where it forms part of the central protuberance. In the 70S ribosome it contacts protein S13 of the 30S subunit (bridge B1b), connecting the 2 subunits; this bridge is implicated in subunit movement. Contacts the P site tRNA; the 5S rRNA and some of its associated proteins might help stabilize positioning of ribosome-bound tRNAs.</text>
</comment>
<comment type="subunit">
    <text evidence="1">Part of the 50S ribosomal subunit; part of the 5S rRNA/L5/L18/L25 subcomplex. Contacts the 5S rRNA and the P site tRNA. Forms a bridge to the 30S subunit in the 70S ribosome.</text>
</comment>
<comment type="similarity">
    <text evidence="1">Belongs to the universal ribosomal protein uL5 family.</text>
</comment>
<accession>Q72NH3</accession>
<evidence type="ECO:0000255" key="1">
    <source>
        <dbReference type="HAMAP-Rule" id="MF_01333"/>
    </source>
</evidence>
<evidence type="ECO:0000305" key="2"/>
<sequence>MAARLRTKYKKEIVPELNKKFKFSSIMQVPRLEKIVLNVGMGEAHTNPKALEAAVEELALITGQRPVKTKAKKSIAGFKIREGMSLGCMVTLRGDYMYEFLDRLVNVALPRVRDFKGVSEKGFDGRGNYNMSIKEQIIFPEIKVDKINTLYGINMTFVTNSKSNEEAYSLLAAFGMPYRNQK</sequence>
<organism>
    <name type="scientific">Leptospira interrogans serogroup Icterohaemorrhagiae serovar copenhageni (strain Fiocruz L1-130)</name>
    <dbReference type="NCBI Taxonomy" id="267671"/>
    <lineage>
        <taxon>Bacteria</taxon>
        <taxon>Pseudomonadati</taxon>
        <taxon>Spirochaetota</taxon>
        <taxon>Spirochaetia</taxon>
        <taxon>Leptospirales</taxon>
        <taxon>Leptospiraceae</taxon>
        <taxon>Leptospira</taxon>
    </lineage>
</organism>
<keyword id="KW-0687">Ribonucleoprotein</keyword>
<keyword id="KW-0689">Ribosomal protein</keyword>
<keyword id="KW-0694">RNA-binding</keyword>
<keyword id="KW-0699">rRNA-binding</keyword>
<keyword id="KW-0820">tRNA-binding</keyword>
<proteinExistence type="inferred from homology"/>
<gene>
    <name evidence="1" type="primary">rplE</name>
    <name type="ordered locus">LIC_12861</name>
</gene>
<dbReference type="EMBL" id="AE016823">
    <property type="protein sequence ID" value="AAS71414.1"/>
    <property type="molecule type" value="Genomic_DNA"/>
</dbReference>
<dbReference type="RefSeq" id="WP_000741297.1">
    <property type="nucleotide sequence ID" value="NC_005823.1"/>
</dbReference>
<dbReference type="SMR" id="Q72NH3"/>
<dbReference type="GeneID" id="61142735"/>
<dbReference type="KEGG" id="lic:LIC_12861"/>
<dbReference type="HOGENOM" id="CLU_061015_2_1_12"/>
<dbReference type="Proteomes" id="UP000007037">
    <property type="component" value="Chromosome I"/>
</dbReference>
<dbReference type="GO" id="GO:1990904">
    <property type="term" value="C:ribonucleoprotein complex"/>
    <property type="evidence" value="ECO:0007669"/>
    <property type="project" value="UniProtKB-KW"/>
</dbReference>
<dbReference type="GO" id="GO:0005840">
    <property type="term" value="C:ribosome"/>
    <property type="evidence" value="ECO:0007669"/>
    <property type="project" value="UniProtKB-KW"/>
</dbReference>
<dbReference type="GO" id="GO:0019843">
    <property type="term" value="F:rRNA binding"/>
    <property type="evidence" value="ECO:0007669"/>
    <property type="project" value="UniProtKB-UniRule"/>
</dbReference>
<dbReference type="GO" id="GO:0003735">
    <property type="term" value="F:structural constituent of ribosome"/>
    <property type="evidence" value="ECO:0007669"/>
    <property type="project" value="InterPro"/>
</dbReference>
<dbReference type="GO" id="GO:0000049">
    <property type="term" value="F:tRNA binding"/>
    <property type="evidence" value="ECO:0007669"/>
    <property type="project" value="UniProtKB-UniRule"/>
</dbReference>
<dbReference type="GO" id="GO:0006412">
    <property type="term" value="P:translation"/>
    <property type="evidence" value="ECO:0007669"/>
    <property type="project" value="UniProtKB-UniRule"/>
</dbReference>
<dbReference type="FunFam" id="3.30.1440.10:FF:000001">
    <property type="entry name" value="50S ribosomal protein L5"/>
    <property type="match status" value="1"/>
</dbReference>
<dbReference type="Gene3D" id="3.30.1440.10">
    <property type="match status" value="1"/>
</dbReference>
<dbReference type="HAMAP" id="MF_01333_B">
    <property type="entry name" value="Ribosomal_uL5_B"/>
    <property type="match status" value="1"/>
</dbReference>
<dbReference type="InterPro" id="IPR002132">
    <property type="entry name" value="Ribosomal_uL5"/>
</dbReference>
<dbReference type="InterPro" id="IPR020930">
    <property type="entry name" value="Ribosomal_uL5_bac-type"/>
</dbReference>
<dbReference type="InterPro" id="IPR031309">
    <property type="entry name" value="Ribosomal_uL5_C"/>
</dbReference>
<dbReference type="InterPro" id="IPR020929">
    <property type="entry name" value="Ribosomal_uL5_CS"/>
</dbReference>
<dbReference type="InterPro" id="IPR022803">
    <property type="entry name" value="Ribosomal_uL5_dom_sf"/>
</dbReference>
<dbReference type="InterPro" id="IPR031310">
    <property type="entry name" value="Ribosomal_uL5_N"/>
</dbReference>
<dbReference type="NCBIfam" id="NF000585">
    <property type="entry name" value="PRK00010.1"/>
    <property type="match status" value="1"/>
</dbReference>
<dbReference type="PANTHER" id="PTHR11994">
    <property type="entry name" value="60S RIBOSOMAL PROTEIN L11-RELATED"/>
    <property type="match status" value="1"/>
</dbReference>
<dbReference type="Pfam" id="PF00281">
    <property type="entry name" value="Ribosomal_L5"/>
    <property type="match status" value="1"/>
</dbReference>
<dbReference type="Pfam" id="PF00673">
    <property type="entry name" value="Ribosomal_L5_C"/>
    <property type="match status" value="1"/>
</dbReference>
<dbReference type="PIRSF" id="PIRSF002161">
    <property type="entry name" value="Ribosomal_L5"/>
    <property type="match status" value="1"/>
</dbReference>
<dbReference type="SUPFAM" id="SSF55282">
    <property type="entry name" value="RL5-like"/>
    <property type="match status" value="1"/>
</dbReference>
<dbReference type="PROSITE" id="PS00358">
    <property type="entry name" value="RIBOSOMAL_L5"/>
    <property type="match status" value="1"/>
</dbReference>
<feature type="chain" id="PRO_0000124940" description="Large ribosomal subunit protein uL5">
    <location>
        <begin position="1"/>
        <end position="182"/>
    </location>
</feature>
<protein>
    <recommendedName>
        <fullName evidence="1">Large ribosomal subunit protein uL5</fullName>
    </recommendedName>
    <alternativeName>
        <fullName evidence="2">50S ribosomal protein L5</fullName>
    </alternativeName>
</protein>